<name>KCY_CHLTR</name>
<accession>O84458</accession>
<reference key="1">
    <citation type="journal article" date="1998" name="Science">
        <title>Genome sequence of an obligate intracellular pathogen of humans: Chlamydia trachomatis.</title>
        <authorList>
            <person name="Stephens R.S."/>
            <person name="Kalman S."/>
            <person name="Lammel C.J."/>
            <person name="Fan J."/>
            <person name="Marathe R."/>
            <person name="Aravind L."/>
            <person name="Mitchell W.P."/>
            <person name="Olinger L."/>
            <person name="Tatusov R.L."/>
            <person name="Zhao Q."/>
            <person name="Koonin E.V."/>
            <person name="Davis R.W."/>
        </authorList>
    </citation>
    <scope>NUCLEOTIDE SEQUENCE [LARGE SCALE GENOMIC DNA]</scope>
    <source>
        <strain>ATCC VR-885 / DSM 19411 / UW-3/Cx</strain>
    </source>
</reference>
<evidence type="ECO:0000255" key="1">
    <source>
        <dbReference type="HAMAP-Rule" id="MF_00238"/>
    </source>
</evidence>
<protein>
    <recommendedName>
        <fullName evidence="1">Cytidylate kinase</fullName>
        <shortName evidence="1">CK</shortName>
        <ecNumber evidence="1">2.7.4.25</ecNumber>
    </recommendedName>
    <alternativeName>
        <fullName evidence="1">Cytidine monophosphate kinase</fullName>
        <shortName evidence="1">CMP kinase</shortName>
    </alternativeName>
</protein>
<gene>
    <name evidence="1" type="primary">cmk</name>
    <name type="ordered locus">CT_452</name>
</gene>
<sequence length="216" mass="24022">MIITIDGPSGTGKSTLAKALAQTLQFLYCNTGAMYRTLAYARLQPDWQEVPLEDFLASPPFSFSFSKDSPLQAFYGDRLLTSELSSQEVANFASLFSKEPLVRAYMQTLQKQYATVGNCVFEGRDMGSKVFPHAEVKIFLTAKPEIRAERRLKDLPQGSLSKEALMAELIARDQADQQRECDPLVIPQDATVIDSSDLTISQILEKILPLIPSHLT</sequence>
<comment type="catalytic activity">
    <reaction evidence="1">
        <text>CMP + ATP = CDP + ADP</text>
        <dbReference type="Rhea" id="RHEA:11600"/>
        <dbReference type="ChEBI" id="CHEBI:30616"/>
        <dbReference type="ChEBI" id="CHEBI:58069"/>
        <dbReference type="ChEBI" id="CHEBI:60377"/>
        <dbReference type="ChEBI" id="CHEBI:456216"/>
        <dbReference type="EC" id="2.7.4.25"/>
    </reaction>
</comment>
<comment type="catalytic activity">
    <reaction evidence="1">
        <text>dCMP + ATP = dCDP + ADP</text>
        <dbReference type="Rhea" id="RHEA:25094"/>
        <dbReference type="ChEBI" id="CHEBI:30616"/>
        <dbReference type="ChEBI" id="CHEBI:57566"/>
        <dbReference type="ChEBI" id="CHEBI:58593"/>
        <dbReference type="ChEBI" id="CHEBI:456216"/>
        <dbReference type="EC" id="2.7.4.25"/>
    </reaction>
</comment>
<comment type="subcellular location">
    <subcellularLocation>
        <location evidence="1">Cytoplasm</location>
    </subcellularLocation>
</comment>
<comment type="similarity">
    <text evidence="1">Belongs to the cytidylate kinase family. Type 1 subfamily.</text>
</comment>
<organism>
    <name type="scientific">Chlamydia trachomatis serovar D (strain ATCC VR-885 / DSM 19411 / UW-3/Cx)</name>
    <dbReference type="NCBI Taxonomy" id="272561"/>
    <lineage>
        <taxon>Bacteria</taxon>
        <taxon>Pseudomonadati</taxon>
        <taxon>Chlamydiota</taxon>
        <taxon>Chlamydiia</taxon>
        <taxon>Chlamydiales</taxon>
        <taxon>Chlamydiaceae</taxon>
        <taxon>Chlamydia/Chlamydophila group</taxon>
        <taxon>Chlamydia</taxon>
    </lineage>
</organism>
<feature type="chain" id="PRO_0000131902" description="Cytidylate kinase">
    <location>
        <begin position="1"/>
        <end position="216"/>
    </location>
</feature>
<feature type="binding site" evidence="1">
    <location>
        <begin position="7"/>
        <end position="15"/>
    </location>
    <ligand>
        <name>ATP</name>
        <dbReference type="ChEBI" id="CHEBI:30616"/>
    </ligand>
</feature>
<proteinExistence type="inferred from homology"/>
<keyword id="KW-0067">ATP-binding</keyword>
<keyword id="KW-0963">Cytoplasm</keyword>
<keyword id="KW-0418">Kinase</keyword>
<keyword id="KW-0547">Nucleotide-binding</keyword>
<keyword id="KW-1185">Reference proteome</keyword>
<keyword id="KW-0808">Transferase</keyword>
<dbReference type="EC" id="2.7.4.25" evidence="1"/>
<dbReference type="EMBL" id="AE001273">
    <property type="protein sequence ID" value="AAC68052.1"/>
    <property type="molecule type" value="Genomic_DNA"/>
</dbReference>
<dbReference type="PIR" id="G71512">
    <property type="entry name" value="G71512"/>
</dbReference>
<dbReference type="RefSeq" id="NP_219965.1">
    <property type="nucleotide sequence ID" value="NC_000117.1"/>
</dbReference>
<dbReference type="RefSeq" id="WP_010725201.1">
    <property type="nucleotide sequence ID" value="NC_000117.1"/>
</dbReference>
<dbReference type="SMR" id="O84458"/>
<dbReference type="FunCoup" id="O84458">
    <property type="interactions" value="128"/>
</dbReference>
<dbReference type="STRING" id="272561.CT_452"/>
<dbReference type="EnsemblBacteria" id="AAC68052">
    <property type="protein sequence ID" value="AAC68052"/>
    <property type="gene ID" value="CT_452"/>
</dbReference>
<dbReference type="GeneID" id="884226"/>
<dbReference type="KEGG" id="ctr:CT_452"/>
<dbReference type="PATRIC" id="fig|272561.5.peg.489"/>
<dbReference type="HOGENOM" id="CLU_079959_0_2_0"/>
<dbReference type="InParanoid" id="O84458"/>
<dbReference type="OrthoDB" id="9807434at2"/>
<dbReference type="Proteomes" id="UP000000431">
    <property type="component" value="Chromosome"/>
</dbReference>
<dbReference type="GO" id="GO:0005829">
    <property type="term" value="C:cytosol"/>
    <property type="evidence" value="ECO:0000318"/>
    <property type="project" value="GO_Central"/>
</dbReference>
<dbReference type="GO" id="GO:0004127">
    <property type="term" value="F:(d)CMP kinase activity"/>
    <property type="evidence" value="ECO:0000318"/>
    <property type="project" value="GO_Central"/>
</dbReference>
<dbReference type="GO" id="GO:0005524">
    <property type="term" value="F:ATP binding"/>
    <property type="evidence" value="ECO:0007669"/>
    <property type="project" value="UniProtKB-UniRule"/>
</dbReference>
<dbReference type="GO" id="GO:0036430">
    <property type="term" value="F:CMP kinase activity"/>
    <property type="evidence" value="ECO:0007669"/>
    <property type="project" value="RHEA"/>
</dbReference>
<dbReference type="GO" id="GO:0036431">
    <property type="term" value="F:dCMP kinase activity"/>
    <property type="evidence" value="ECO:0007669"/>
    <property type="project" value="RHEA"/>
</dbReference>
<dbReference type="GO" id="GO:0015949">
    <property type="term" value="P:nucleobase-containing small molecule interconversion"/>
    <property type="evidence" value="ECO:0000318"/>
    <property type="project" value="GO_Central"/>
</dbReference>
<dbReference type="GO" id="GO:0006220">
    <property type="term" value="P:pyrimidine nucleotide metabolic process"/>
    <property type="evidence" value="ECO:0007669"/>
    <property type="project" value="UniProtKB-UniRule"/>
</dbReference>
<dbReference type="CDD" id="cd02020">
    <property type="entry name" value="CMPK"/>
    <property type="match status" value="1"/>
</dbReference>
<dbReference type="FunFam" id="3.40.50.300:FF:003002">
    <property type="entry name" value="Cytidylate kinase"/>
    <property type="match status" value="1"/>
</dbReference>
<dbReference type="Gene3D" id="3.40.50.300">
    <property type="entry name" value="P-loop containing nucleotide triphosphate hydrolases"/>
    <property type="match status" value="1"/>
</dbReference>
<dbReference type="HAMAP" id="MF_00238">
    <property type="entry name" value="Cytidyl_kinase_type1"/>
    <property type="match status" value="1"/>
</dbReference>
<dbReference type="InterPro" id="IPR003136">
    <property type="entry name" value="Cytidylate_kin"/>
</dbReference>
<dbReference type="InterPro" id="IPR011994">
    <property type="entry name" value="Cytidylate_kinase_dom"/>
</dbReference>
<dbReference type="InterPro" id="IPR027417">
    <property type="entry name" value="P-loop_NTPase"/>
</dbReference>
<dbReference type="NCBIfam" id="TIGR00017">
    <property type="entry name" value="cmk"/>
    <property type="match status" value="1"/>
</dbReference>
<dbReference type="Pfam" id="PF02224">
    <property type="entry name" value="Cytidylate_kin"/>
    <property type="match status" value="1"/>
</dbReference>
<dbReference type="SUPFAM" id="SSF52540">
    <property type="entry name" value="P-loop containing nucleoside triphosphate hydrolases"/>
    <property type="match status" value="1"/>
</dbReference>